<protein>
    <recommendedName>
        <fullName evidence="1">Large ribosomal subunit protein bL9</fullName>
    </recommendedName>
    <alternativeName>
        <fullName evidence="2">50S ribosomal protein L9</fullName>
    </alternativeName>
</protein>
<sequence length="189" mass="20917">MEVILLERIGRLGQMGDTVKVKDGYARNFLLPQGKALRANEANKKKFEGQRAQLEAQNLERKNEAQAVADKLNGESFIVVRSAGETGQLYGSVSTRDIAEIITANGFTLHRNQVELNHPIKTIGLHEVSVSLHPEVQVKVMVNIARSTEEAECQAKGEDLTSIEAIYGIEEQPLSEEVFDDEDEAEDQA</sequence>
<gene>
    <name evidence="1" type="primary">rplI</name>
    <name type="ordered locus">BMEA_A0486</name>
</gene>
<comment type="function">
    <text evidence="1">Binds to the 23S rRNA.</text>
</comment>
<comment type="similarity">
    <text evidence="1">Belongs to the bacterial ribosomal protein bL9 family.</text>
</comment>
<accession>C0RHF9</accession>
<proteinExistence type="inferred from homology"/>
<feature type="chain" id="PRO_1000196229" description="Large ribosomal subunit protein bL9">
    <location>
        <begin position="1"/>
        <end position="189"/>
    </location>
</feature>
<name>RL9_BRUMB</name>
<keyword id="KW-0687">Ribonucleoprotein</keyword>
<keyword id="KW-0689">Ribosomal protein</keyword>
<keyword id="KW-0694">RNA-binding</keyword>
<keyword id="KW-0699">rRNA-binding</keyword>
<evidence type="ECO:0000255" key="1">
    <source>
        <dbReference type="HAMAP-Rule" id="MF_00503"/>
    </source>
</evidence>
<evidence type="ECO:0000305" key="2"/>
<organism>
    <name type="scientific">Brucella melitensis biotype 2 (strain ATCC 23457)</name>
    <dbReference type="NCBI Taxonomy" id="546272"/>
    <lineage>
        <taxon>Bacteria</taxon>
        <taxon>Pseudomonadati</taxon>
        <taxon>Pseudomonadota</taxon>
        <taxon>Alphaproteobacteria</taxon>
        <taxon>Hyphomicrobiales</taxon>
        <taxon>Brucellaceae</taxon>
        <taxon>Brucella/Ochrobactrum group</taxon>
        <taxon>Brucella</taxon>
    </lineage>
</organism>
<dbReference type="EMBL" id="CP001488">
    <property type="protein sequence ID" value="ACO00267.1"/>
    <property type="molecule type" value="Genomic_DNA"/>
</dbReference>
<dbReference type="RefSeq" id="WP_004683101.1">
    <property type="nucleotide sequence ID" value="NC_012441.1"/>
</dbReference>
<dbReference type="SMR" id="C0RHF9"/>
<dbReference type="GeneID" id="29594326"/>
<dbReference type="KEGG" id="bmi:BMEA_A0486"/>
<dbReference type="HOGENOM" id="CLU_078938_1_0_5"/>
<dbReference type="Proteomes" id="UP000001748">
    <property type="component" value="Chromosome I"/>
</dbReference>
<dbReference type="GO" id="GO:1990904">
    <property type="term" value="C:ribonucleoprotein complex"/>
    <property type="evidence" value="ECO:0007669"/>
    <property type="project" value="UniProtKB-KW"/>
</dbReference>
<dbReference type="GO" id="GO:0005840">
    <property type="term" value="C:ribosome"/>
    <property type="evidence" value="ECO:0007669"/>
    <property type="project" value="UniProtKB-KW"/>
</dbReference>
<dbReference type="GO" id="GO:0019843">
    <property type="term" value="F:rRNA binding"/>
    <property type="evidence" value="ECO:0007669"/>
    <property type="project" value="UniProtKB-UniRule"/>
</dbReference>
<dbReference type="GO" id="GO:0003735">
    <property type="term" value="F:structural constituent of ribosome"/>
    <property type="evidence" value="ECO:0007669"/>
    <property type="project" value="InterPro"/>
</dbReference>
<dbReference type="GO" id="GO:0006412">
    <property type="term" value="P:translation"/>
    <property type="evidence" value="ECO:0007669"/>
    <property type="project" value="UniProtKB-UniRule"/>
</dbReference>
<dbReference type="Gene3D" id="3.10.430.100">
    <property type="entry name" value="Ribosomal protein L9, C-terminal domain"/>
    <property type="match status" value="1"/>
</dbReference>
<dbReference type="Gene3D" id="3.40.5.10">
    <property type="entry name" value="Ribosomal protein L9, N-terminal domain"/>
    <property type="match status" value="1"/>
</dbReference>
<dbReference type="HAMAP" id="MF_00503">
    <property type="entry name" value="Ribosomal_bL9"/>
    <property type="match status" value="1"/>
</dbReference>
<dbReference type="InterPro" id="IPR000244">
    <property type="entry name" value="Ribosomal_bL9"/>
</dbReference>
<dbReference type="InterPro" id="IPR009027">
    <property type="entry name" value="Ribosomal_bL9/RNase_H1_N"/>
</dbReference>
<dbReference type="InterPro" id="IPR020594">
    <property type="entry name" value="Ribosomal_bL9_bac/chp"/>
</dbReference>
<dbReference type="InterPro" id="IPR020069">
    <property type="entry name" value="Ribosomal_bL9_C"/>
</dbReference>
<dbReference type="InterPro" id="IPR036791">
    <property type="entry name" value="Ribosomal_bL9_C_sf"/>
</dbReference>
<dbReference type="InterPro" id="IPR020070">
    <property type="entry name" value="Ribosomal_bL9_N"/>
</dbReference>
<dbReference type="InterPro" id="IPR036935">
    <property type="entry name" value="Ribosomal_bL9_N_sf"/>
</dbReference>
<dbReference type="NCBIfam" id="TIGR00158">
    <property type="entry name" value="L9"/>
    <property type="match status" value="1"/>
</dbReference>
<dbReference type="PANTHER" id="PTHR21368">
    <property type="entry name" value="50S RIBOSOMAL PROTEIN L9"/>
    <property type="match status" value="1"/>
</dbReference>
<dbReference type="Pfam" id="PF03948">
    <property type="entry name" value="Ribosomal_L9_C"/>
    <property type="match status" value="1"/>
</dbReference>
<dbReference type="Pfam" id="PF01281">
    <property type="entry name" value="Ribosomal_L9_N"/>
    <property type="match status" value="1"/>
</dbReference>
<dbReference type="SUPFAM" id="SSF55658">
    <property type="entry name" value="L9 N-domain-like"/>
    <property type="match status" value="1"/>
</dbReference>
<dbReference type="SUPFAM" id="SSF55653">
    <property type="entry name" value="Ribosomal protein L9 C-domain"/>
    <property type="match status" value="1"/>
</dbReference>
<dbReference type="PROSITE" id="PS00651">
    <property type="entry name" value="RIBOSOMAL_L9"/>
    <property type="match status" value="1"/>
</dbReference>
<reference key="1">
    <citation type="submission" date="2009-03" db="EMBL/GenBank/DDBJ databases">
        <title>Brucella melitensis ATCC 23457 whole genome shotgun sequencing project.</title>
        <authorList>
            <person name="Setubal J.C."/>
            <person name="Boyle S."/>
            <person name="Crasta O.R."/>
            <person name="Gillespie J.J."/>
            <person name="Kenyon R.W."/>
            <person name="Lu J."/>
            <person name="Mane S."/>
            <person name="Nagrani S."/>
            <person name="Shallom J.M."/>
            <person name="Shallom S."/>
            <person name="Shukla M."/>
            <person name="Snyder E.E."/>
            <person name="Sobral B.W."/>
            <person name="Wattam A.R."/>
            <person name="Will R."/>
            <person name="Williams K."/>
            <person name="Yoo H."/>
            <person name="Munk C."/>
            <person name="Tapia R."/>
            <person name="Han C."/>
            <person name="Detter J.C."/>
            <person name="Bruce D."/>
            <person name="Brettin T.S."/>
        </authorList>
    </citation>
    <scope>NUCLEOTIDE SEQUENCE [LARGE SCALE GENOMIC DNA]</scope>
    <source>
        <strain>ATCC 23457</strain>
    </source>
</reference>